<feature type="chain" id="PRO_0000264780" description="Acetylglutamate kinase">
    <location>
        <begin position="1"/>
        <end position="293"/>
    </location>
</feature>
<feature type="binding site" evidence="1">
    <location>
        <begin position="66"/>
        <end position="67"/>
    </location>
    <ligand>
        <name>substrate</name>
    </ligand>
</feature>
<feature type="binding site" evidence="1">
    <location>
        <position position="88"/>
    </location>
    <ligand>
        <name>substrate</name>
    </ligand>
</feature>
<feature type="binding site" evidence="1">
    <location>
        <position position="190"/>
    </location>
    <ligand>
        <name>substrate</name>
    </ligand>
</feature>
<feature type="site" description="Transition state stabilizer" evidence="1">
    <location>
        <position position="31"/>
    </location>
</feature>
<feature type="site" description="Transition state stabilizer" evidence="1">
    <location>
        <position position="250"/>
    </location>
</feature>
<comment type="function">
    <text evidence="1">Catalyzes the ATP-dependent phosphorylation of N-acetyl-L-glutamate.</text>
</comment>
<comment type="catalytic activity">
    <reaction evidence="1">
        <text>N-acetyl-L-glutamate + ATP = N-acetyl-L-glutamyl 5-phosphate + ADP</text>
        <dbReference type="Rhea" id="RHEA:14629"/>
        <dbReference type="ChEBI" id="CHEBI:30616"/>
        <dbReference type="ChEBI" id="CHEBI:44337"/>
        <dbReference type="ChEBI" id="CHEBI:57936"/>
        <dbReference type="ChEBI" id="CHEBI:456216"/>
        <dbReference type="EC" id="2.7.2.8"/>
    </reaction>
</comment>
<comment type="pathway">
    <text evidence="1">Amino-acid biosynthesis; L-arginine biosynthesis; N(2)-acetyl-L-ornithine from L-glutamate: step 2/4.</text>
</comment>
<comment type="subcellular location">
    <subcellularLocation>
        <location evidence="1">Cytoplasm</location>
    </subcellularLocation>
</comment>
<comment type="similarity">
    <text evidence="1">Belongs to the acetylglutamate kinase family. ArgB subfamily.</text>
</comment>
<protein>
    <recommendedName>
        <fullName evidence="1">Acetylglutamate kinase</fullName>
        <ecNumber evidence="1">2.7.2.8</ecNumber>
    </recommendedName>
    <alternativeName>
        <fullName evidence="1">N-acetyl-L-glutamate 5-phosphotransferase</fullName>
    </alternativeName>
    <alternativeName>
        <fullName evidence="1">NAG kinase</fullName>
        <shortName evidence="1">NAGK</shortName>
    </alternativeName>
</protein>
<name>ARGB_THIDA</name>
<dbReference type="EC" id="2.7.2.8" evidence="1"/>
<dbReference type="EMBL" id="CP000116">
    <property type="protein sequence ID" value="AAZ98639.1"/>
    <property type="molecule type" value="Genomic_DNA"/>
</dbReference>
<dbReference type="RefSeq" id="WP_011313198.1">
    <property type="nucleotide sequence ID" value="NC_007404.1"/>
</dbReference>
<dbReference type="SMR" id="Q3SFH1"/>
<dbReference type="STRING" id="292415.Tbd_2686"/>
<dbReference type="KEGG" id="tbd:Tbd_2686"/>
<dbReference type="eggNOG" id="COG0548">
    <property type="taxonomic scope" value="Bacteria"/>
</dbReference>
<dbReference type="HOGENOM" id="CLU_053680_0_0_4"/>
<dbReference type="OrthoDB" id="9803155at2"/>
<dbReference type="UniPathway" id="UPA00068">
    <property type="reaction ID" value="UER00107"/>
</dbReference>
<dbReference type="Proteomes" id="UP000008291">
    <property type="component" value="Chromosome"/>
</dbReference>
<dbReference type="GO" id="GO:0005737">
    <property type="term" value="C:cytoplasm"/>
    <property type="evidence" value="ECO:0007669"/>
    <property type="project" value="UniProtKB-SubCell"/>
</dbReference>
<dbReference type="GO" id="GO:0003991">
    <property type="term" value="F:acetylglutamate kinase activity"/>
    <property type="evidence" value="ECO:0007669"/>
    <property type="project" value="UniProtKB-UniRule"/>
</dbReference>
<dbReference type="GO" id="GO:0005524">
    <property type="term" value="F:ATP binding"/>
    <property type="evidence" value="ECO:0007669"/>
    <property type="project" value="UniProtKB-UniRule"/>
</dbReference>
<dbReference type="GO" id="GO:0042450">
    <property type="term" value="P:arginine biosynthetic process via ornithine"/>
    <property type="evidence" value="ECO:0007669"/>
    <property type="project" value="UniProtKB-UniRule"/>
</dbReference>
<dbReference type="GO" id="GO:0006526">
    <property type="term" value="P:L-arginine biosynthetic process"/>
    <property type="evidence" value="ECO:0007669"/>
    <property type="project" value="UniProtKB-UniPathway"/>
</dbReference>
<dbReference type="CDD" id="cd04250">
    <property type="entry name" value="AAK_NAGK-C"/>
    <property type="match status" value="1"/>
</dbReference>
<dbReference type="FunFam" id="3.40.1160.10:FF:000004">
    <property type="entry name" value="Acetylglutamate kinase"/>
    <property type="match status" value="1"/>
</dbReference>
<dbReference type="Gene3D" id="3.40.1160.10">
    <property type="entry name" value="Acetylglutamate kinase-like"/>
    <property type="match status" value="1"/>
</dbReference>
<dbReference type="HAMAP" id="MF_00082">
    <property type="entry name" value="ArgB"/>
    <property type="match status" value="1"/>
</dbReference>
<dbReference type="InterPro" id="IPR036393">
    <property type="entry name" value="AceGlu_kinase-like_sf"/>
</dbReference>
<dbReference type="InterPro" id="IPR004662">
    <property type="entry name" value="AcgluKinase_fam"/>
</dbReference>
<dbReference type="InterPro" id="IPR037528">
    <property type="entry name" value="ArgB"/>
</dbReference>
<dbReference type="InterPro" id="IPR001048">
    <property type="entry name" value="Asp/Glu/Uridylate_kinase"/>
</dbReference>
<dbReference type="InterPro" id="IPR041727">
    <property type="entry name" value="NAGK-C"/>
</dbReference>
<dbReference type="NCBIfam" id="TIGR00761">
    <property type="entry name" value="argB"/>
    <property type="match status" value="1"/>
</dbReference>
<dbReference type="PANTHER" id="PTHR23342">
    <property type="entry name" value="N-ACETYLGLUTAMATE SYNTHASE"/>
    <property type="match status" value="1"/>
</dbReference>
<dbReference type="PANTHER" id="PTHR23342:SF0">
    <property type="entry name" value="N-ACETYLGLUTAMATE SYNTHASE, MITOCHONDRIAL"/>
    <property type="match status" value="1"/>
</dbReference>
<dbReference type="Pfam" id="PF00696">
    <property type="entry name" value="AA_kinase"/>
    <property type="match status" value="1"/>
</dbReference>
<dbReference type="PIRSF" id="PIRSF000728">
    <property type="entry name" value="NAGK"/>
    <property type="match status" value="1"/>
</dbReference>
<dbReference type="SUPFAM" id="SSF53633">
    <property type="entry name" value="Carbamate kinase-like"/>
    <property type="match status" value="1"/>
</dbReference>
<organism>
    <name type="scientific">Thiobacillus denitrificans (strain ATCC 25259 / T1)</name>
    <dbReference type="NCBI Taxonomy" id="292415"/>
    <lineage>
        <taxon>Bacteria</taxon>
        <taxon>Pseudomonadati</taxon>
        <taxon>Pseudomonadota</taxon>
        <taxon>Betaproteobacteria</taxon>
        <taxon>Nitrosomonadales</taxon>
        <taxon>Thiobacillaceae</taxon>
        <taxon>Thiobacillus</taxon>
    </lineage>
</organism>
<gene>
    <name evidence="1" type="primary">argB</name>
    <name type="ordered locus">Tbd_2686</name>
</gene>
<evidence type="ECO:0000255" key="1">
    <source>
        <dbReference type="HAMAP-Rule" id="MF_00082"/>
    </source>
</evidence>
<proteinExistence type="inferred from homology"/>
<keyword id="KW-0028">Amino-acid biosynthesis</keyword>
<keyword id="KW-0055">Arginine biosynthesis</keyword>
<keyword id="KW-0067">ATP-binding</keyword>
<keyword id="KW-0963">Cytoplasm</keyword>
<keyword id="KW-0418">Kinase</keyword>
<keyword id="KW-0547">Nucleotide-binding</keyword>
<keyword id="KW-1185">Reference proteome</keyword>
<keyword id="KW-0808">Transferase</keyword>
<reference key="1">
    <citation type="journal article" date="2006" name="J. Bacteriol.">
        <title>The genome sequence of the obligately chemolithoautotrophic, facultatively anaerobic bacterium Thiobacillus denitrificans.</title>
        <authorList>
            <person name="Beller H.R."/>
            <person name="Chain P.S."/>
            <person name="Letain T.E."/>
            <person name="Chakicherla A."/>
            <person name="Larimer F.W."/>
            <person name="Richardson P.M."/>
            <person name="Coleman M.A."/>
            <person name="Wood A.P."/>
            <person name="Kelly D.P."/>
        </authorList>
    </citation>
    <scope>NUCLEOTIDE SEQUENCE [LARGE SCALE GENOMIC DNA]</scope>
    <source>
        <strain>ATCC 25259 / T1</strain>
    </source>
</reference>
<accession>Q3SFH1</accession>
<sequence>MTVHTAAEKAYILSEALPYIQRFYDKTIVIKYGGNAMTERHLMEAFAKDVVLLKLVGMNPVVVHGGGPQIAGLLQRIGKQSEFIQGMRVTDEETLDVVEMVLGGLVNQDIVTLINKHGGRAVGLTGKDGNFIHAKKMLVKSKEKADEMLDIGQVGEITGIDPEIIQVLDARDFIPVVAPLGTDAEGNAYNINADVAAGKIAGVLQAEKVIFMTNTPGVLDKDKKLLTGLTPREISDLIADDTISGGMIPKVGYAVDAVNSGVKTAHIIDGRVEHALLLEVLTPEGVGTLIKRS</sequence>